<comment type="function">
    <text evidence="1">Catalyzes the reversible oxidation of malate to oxaloacetate.</text>
</comment>
<comment type="catalytic activity">
    <reaction evidence="1">
        <text>(S)-malate + NAD(+) = oxaloacetate + NADH + H(+)</text>
        <dbReference type="Rhea" id="RHEA:21432"/>
        <dbReference type="ChEBI" id="CHEBI:15378"/>
        <dbReference type="ChEBI" id="CHEBI:15589"/>
        <dbReference type="ChEBI" id="CHEBI:16452"/>
        <dbReference type="ChEBI" id="CHEBI:57540"/>
        <dbReference type="ChEBI" id="CHEBI:57945"/>
        <dbReference type="EC" id="1.1.1.37"/>
    </reaction>
</comment>
<comment type="subunit">
    <text evidence="1">Homodimer.</text>
</comment>
<comment type="similarity">
    <text evidence="1">Belongs to the LDH/MDH superfamily. MDH type 1 family.</text>
</comment>
<gene>
    <name evidence="1" type="primary">mdh</name>
    <name type="ordered locus">SG3249</name>
</gene>
<accession>B5REV7</accession>
<keyword id="KW-0520">NAD</keyword>
<keyword id="KW-0560">Oxidoreductase</keyword>
<keyword id="KW-0816">Tricarboxylic acid cycle</keyword>
<name>MDH_SALG2</name>
<proteinExistence type="inferred from homology"/>
<evidence type="ECO:0000255" key="1">
    <source>
        <dbReference type="HAMAP-Rule" id="MF_01516"/>
    </source>
</evidence>
<protein>
    <recommendedName>
        <fullName evidence="1">Malate dehydrogenase</fullName>
        <ecNumber evidence="1">1.1.1.37</ecNumber>
    </recommendedName>
</protein>
<reference key="1">
    <citation type="journal article" date="2008" name="Genome Res.">
        <title>Comparative genome analysis of Salmonella enteritidis PT4 and Salmonella gallinarum 287/91 provides insights into evolutionary and host adaptation pathways.</title>
        <authorList>
            <person name="Thomson N.R."/>
            <person name="Clayton D.J."/>
            <person name="Windhorst D."/>
            <person name="Vernikos G."/>
            <person name="Davidson S."/>
            <person name="Churcher C."/>
            <person name="Quail M.A."/>
            <person name="Stevens M."/>
            <person name="Jones M.A."/>
            <person name="Watson M."/>
            <person name="Barron A."/>
            <person name="Layton A."/>
            <person name="Pickard D."/>
            <person name="Kingsley R.A."/>
            <person name="Bignell A."/>
            <person name="Clark L."/>
            <person name="Harris B."/>
            <person name="Ormond D."/>
            <person name="Abdellah Z."/>
            <person name="Brooks K."/>
            <person name="Cherevach I."/>
            <person name="Chillingworth T."/>
            <person name="Woodward J."/>
            <person name="Norberczak H."/>
            <person name="Lord A."/>
            <person name="Arrowsmith C."/>
            <person name="Jagels K."/>
            <person name="Moule S."/>
            <person name="Mungall K."/>
            <person name="Saunders M."/>
            <person name="Whitehead S."/>
            <person name="Chabalgoity J.A."/>
            <person name="Maskell D."/>
            <person name="Humphreys T."/>
            <person name="Roberts M."/>
            <person name="Barrow P.A."/>
            <person name="Dougan G."/>
            <person name="Parkhill J."/>
        </authorList>
    </citation>
    <scope>NUCLEOTIDE SEQUENCE [LARGE SCALE GENOMIC DNA]</scope>
    <source>
        <strain>287/91 / NCTC 13346</strain>
    </source>
</reference>
<feature type="chain" id="PRO_1000191592" description="Malate dehydrogenase">
    <location>
        <begin position="1"/>
        <end position="312"/>
    </location>
</feature>
<feature type="active site" description="Proton acceptor" evidence="1">
    <location>
        <position position="177"/>
    </location>
</feature>
<feature type="binding site" evidence="1">
    <location>
        <begin position="7"/>
        <end position="13"/>
    </location>
    <ligand>
        <name>NAD(+)</name>
        <dbReference type="ChEBI" id="CHEBI:57540"/>
    </ligand>
</feature>
<feature type="binding site" evidence="1">
    <location>
        <position position="34"/>
    </location>
    <ligand>
        <name>NAD(+)</name>
        <dbReference type="ChEBI" id="CHEBI:57540"/>
    </ligand>
</feature>
<feature type="binding site" evidence="1">
    <location>
        <position position="81"/>
    </location>
    <ligand>
        <name>substrate</name>
    </ligand>
</feature>
<feature type="binding site" evidence="1">
    <location>
        <position position="87"/>
    </location>
    <ligand>
        <name>substrate</name>
    </ligand>
</feature>
<feature type="binding site" evidence="1">
    <location>
        <position position="94"/>
    </location>
    <ligand>
        <name>NAD(+)</name>
        <dbReference type="ChEBI" id="CHEBI:57540"/>
    </ligand>
</feature>
<feature type="binding site" evidence="1">
    <location>
        <begin position="117"/>
        <end position="119"/>
    </location>
    <ligand>
        <name>NAD(+)</name>
        <dbReference type="ChEBI" id="CHEBI:57540"/>
    </ligand>
</feature>
<feature type="binding site" evidence="1">
    <location>
        <position position="119"/>
    </location>
    <ligand>
        <name>substrate</name>
    </ligand>
</feature>
<feature type="binding site" evidence="1">
    <location>
        <position position="153"/>
    </location>
    <ligand>
        <name>substrate</name>
    </ligand>
</feature>
<feature type="binding site" evidence="1">
    <location>
        <position position="227"/>
    </location>
    <ligand>
        <name>NAD(+)</name>
        <dbReference type="ChEBI" id="CHEBI:57540"/>
    </ligand>
</feature>
<sequence length="312" mass="32524">MKVAVLGAAGGIGQALALLLKNQLPSGSELSLYDIAPVTPGVAVDLSHIPTAVKIKGFSGEDATPALEGADVVLISAGVARKPGMDRSDLFNVNAGIVKNLVQQIAKTCPKACVGIITNPVNTTVAIAAEVLKKAGVYDKNKLFGVTTLDIIRSNTFVAELKGKLPTEVEVPVIGGHSGVTILPLLSQIPGVSFTEQEAAELTKRIQNAGTEVVEAKAGGGSATLSMGQAAARFGLSLVRALQGEKGVVECAYVEGDGQYARFFSQPLLLGKNGVEERKSIGTLSAFEQHSLDAMLYTLKKDIQLGEDFINK</sequence>
<dbReference type="EC" id="1.1.1.37" evidence="1"/>
<dbReference type="EMBL" id="AM933173">
    <property type="protein sequence ID" value="CAR39047.1"/>
    <property type="molecule type" value="Genomic_DNA"/>
</dbReference>
<dbReference type="RefSeq" id="WP_000861587.1">
    <property type="nucleotide sequence ID" value="NC_011274.1"/>
</dbReference>
<dbReference type="SMR" id="B5REV7"/>
<dbReference type="KEGG" id="seg:SG3249"/>
<dbReference type="HOGENOM" id="CLU_047181_1_0_6"/>
<dbReference type="Proteomes" id="UP000008321">
    <property type="component" value="Chromosome"/>
</dbReference>
<dbReference type="GO" id="GO:0005737">
    <property type="term" value="C:cytoplasm"/>
    <property type="evidence" value="ECO:0007669"/>
    <property type="project" value="TreeGrafter"/>
</dbReference>
<dbReference type="GO" id="GO:0030060">
    <property type="term" value="F:L-malate dehydrogenase (NAD+) activity"/>
    <property type="evidence" value="ECO:0007669"/>
    <property type="project" value="UniProtKB-UniRule"/>
</dbReference>
<dbReference type="GO" id="GO:0006108">
    <property type="term" value="P:malate metabolic process"/>
    <property type="evidence" value="ECO:0007669"/>
    <property type="project" value="InterPro"/>
</dbReference>
<dbReference type="GO" id="GO:0006099">
    <property type="term" value="P:tricarboxylic acid cycle"/>
    <property type="evidence" value="ECO:0007669"/>
    <property type="project" value="UniProtKB-UniRule"/>
</dbReference>
<dbReference type="CDD" id="cd01337">
    <property type="entry name" value="MDH_glyoxysomal_mitochondrial"/>
    <property type="match status" value="1"/>
</dbReference>
<dbReference type="FunFam" id="3.40.50.720:FF:000017">
    <property type="entry name" value="Malate dehydrogenase"/>
    <property type="match status" value="1"/>
</dbReference>
<dbReference type="FunFam" id="3.90.110.10:FF:000001">
    <property type="entry name" value="Malate dehydrogenase"/>
    <property type="match status" value="1"/>
</dbReference>
<dbReference type="Gene3D" id="3.90.110.10">
    <property type="entry name" value="Lactate dehydrogenase/glycoside hydrolase, family 4, C-terminal"/>
    <property type="match status" value="1"/>
</dbReference>
<dbReference type="Gene3D" id="3.40.50.720">
    <property type="entry name" value="NAD(P)-binding Rossmann-like Domain"/>
    <property type="match status" value="1"/>
</dbReference>
<dbReference type="HAMAP" id="MF_01516">
    <property type="entry name" value="Malate_dehydrog_1"/>
    <property type="match status" value="1"/>
</dbReference>
<dbReference type="InterPro" id="IPR001557">
    <property type="entry name" value="L-lactate/malate_DH"/>
</dbReference>
<dbReference type="InterPro" id="IPR022383">
    <property type="entry name" value="Lactate/malate_DH_C"/>
</dbReference>
<dbReference type="InterPro" id="IPR001236">
    <property type="entry name" value="Lactate/malate_DH_N"/>
</dbReference>
<dbReference type="InterPro" id="IPR015955">
    <property type="entry name" value="Lactate_DH/Glyco_Ohase_4_C"/>
</dbReference>
<dbReference type="InterPro" id="IPR001252">
    <property type="entry name" value="Malate_DH_AS"/>
</dbReference>
<dbReference type="InterPro" id="IPR010097">
    <property type="entry name" value="Malate_DH_type1"/>
</dbReference>
<dbReference type="InterPro" id="IPR023958">
    <property type="entry name" value="Malate_DH_type1_bac"/>
</dbReference>
<dbReference type="InterPro" id="IPR036291">
    <property type="entry name" value="NAD(P)-bd_dom_sf"/>
</dbReference>
<dbReference type="NCBIfam" id="TIGR01772">
    <property type="entry name" value="MDH_euk_gproteo"/>
    <property type="match status" value="1"/>
</dbReference>
<dbReference type="PANTHER" id="PTHR11540">
    <property type="entry name" value="MALATE AND LACTATE DEHYDROGENASE"/>
    <property type="match status" value="1"/>
</dbReference>
<dbReference type="PANTHER" id="PTHR11540:SF16">
    <property type="entry name" value="MALATE DEHYDROGENASE, MITOCHONDRIAL"/>
    <property type="match status" value="1"/>
</dbReference>
<dbReference type="Pfam" id="PF02866">
    <property type="entry name" value="Ldh_1_C"/>
    <property type="match status" value="1"/>
</dbReference>
<dbReference type="Pfam" id="PF00056">
    <property type="entry name" value="Ldh_1_N"/>
    <property type="match status" value="1"/>
</dbReference>
<dbReference type="PIRSF" id="PIRSF000102">
    <property type="entry name" value="Lac_mal_DH"/>
    <property type="match status" value="1"/>
</dbReference>
<dbReference type="SUPFAM" id="SSF56327">
    <property type="entry name" value="LDH C-terminal domain-like"/>
    <property type="match status" value="1"/>
</dbReference>
<dbReference type="SUPFAM" id="SSF51735">
    <property type="entry name" value="NAD(P)-binding Rossmann-fold domains"/>
    <property type="match status" value="1"/>
</dbReference>
<dbReference type="PROSITE" id="PS00068">
    <property type="entry name" value="MDH"/>
    <property type="match status" value="1"/>
</dbReference>
<organism>
    <name type="scientific">Salmonella gallinarum (strain 287/91 / NCTC 13346)</name>
    <dbReference type="NCBI Taxonomy" id="550538"/>
    <lineage>
        <taxon>Bacteria</taxon>
        <taxon>Pseudomonadati</taxon>
        <taxon>Pseudomonadota</taxon>
        <taxon>Gammaproteobacteria</taxon>
        <taxon>Enterobacterales</taxon>
        <taxon>Enterobacteriaceae</taxon>
        <taxon>Salmonella</taxon>
    </lineage>
</organism>